<gene>
    <name type="ORF">ORF72</name>
</gene>
<sequence>MGERVRIKLYVPYQDIRDNCKRRTDFYSDFEISVDDIQYISFSELIRLVKANPEYIEQLKKVLTEWDKGESG</sequence>
<proteinExistence type="predicted"/>
<organismHost>
    <name type="scientific">Acidianus hospitalis</name>
    <dbReference type="NCBI Taxonomy" id="563177"/>
</organismHost>
<organismHost>
    <name type="scientific">Acidianus infernus</name>
    <dbReference type="NCBI Taxonomy" id="12915"/>
</organismHost>
<organism>
    <name type="scientific">Acidianus filamentous virus 1 (isolate United States/Yellowstone)</name>
    <name type="common">AFV-1</name>
    <dbReference type="NCBI Taxonomy" id="654909"/>
    <lineage>
        <taxon>Viruses</taxon>
        <taxon>Adnaviria</taxon>
        <taxon>Zilligvirae</taxon>
        <taxon>Taleaviricota</taxon>
        <taxon>Tokiviricetes</taxon>
        <taxon>Ligamenvirales</taxon>
        <taxon>Ungulaviridae</taxon>
        <taxon>Captovirus</taxon>
        <taxon>Acidianus filamentous virus 1</taxon>
    </lineage>
</organism>
<reference key="1">
    <citation type="journal article" date="2003" name="Virology">
        <title>AFV1, a novel virus infecting hyperthermophilic archaea of the genus acidianus.</title>
        <authorList>
            <person name="Bettstetter M."/>
            <person name="Peng X."/>
            <person name="Garrett R.A."/>
            <person name="Prangishvili D."/>
        </authorList>
    </citation>
    <scope>NUCLEOTIDE SEQUENCE [GENOMIC DNA]</scope>
</reference>
<name>Y072_AFV1Y</name>
<dbReference type="EMBL" id="AJ567472">
    <property type="protein sequence ID" value="CAD98933.1"/>
    <property type="molecule type" value="Genomic_DNA"/>
</dbReference>
<dbReference type="RefSeq" id="YP_003729.1">
    <property type="nucleotide sequence ID" value="NC_005830.1"/>
</dbReference>
<dbReference type="SMR" id="Q70LE7"/>
<dbReference type="KEGG" id="vg:2769160"/>
<dbReference type="Proteomes" id="UP000000514">
    <property type="component" value="Genome"/>
</dbReference>
<accession>Q70LE7</accession>
<feature type="chain" id="PRO_0000384543" description="Uncharacterized protein ORF72">
    <location>
        <begin position="1"/>
        <end position="72"/>
    </location>
</feature>
<protein>
    <recommendedName>
        <fullName>Uncharacterized protein ORF72</fullName>
    </recommendedName>
</protein>
<keyword id="KW-1185">Reference proteome</keyword>